<accession>A8AXU4</accession>
<gene>
    <name evidence="1" type="primary">rpsP</name>
    <name type="ordered locus">SGO_1323</name>
</gene>
<protein>
    <recommendedName>
        <fullName evidence="1">Small ribosomal subunit protein bS16</fullName>
    </recommendedName>
    <alternativeName>
        <fullName evidence="2">30S ribosomal protein S16</fullName>
    </alternativeName>
</protein>
<name>RS16_STRGC</name>
<evidence type="ECO:0000255" key="1">
    <source>
        <dbReference type="HAMAP-Rule" id="MF_00385"/>
    </source>
</evidence>
<evidence type="ECO:0000305" key="2"/>
<dbReference type="EMBL" id="CP000725">
    <property type="protein sequence ID" value="ABV10560.1"/>
    <property type="molecule type" value="Genomic_DNA"/>
</dbReference>
<dbReference type="RefSeq" id="WP_008809260.1">
    <property type="nucleotide sequence ID" value="NC_009785.1"/>
</dbReference>
<dbReference type="SMR" id="A8AXU4"/>
<dbReference type="STRING" id="467705.SGO_1323"/>
<dbReference type="GeneID" id="93787546"/>
<dbReference type="KEGG" id="sgo:SGO_1323"/>
<dbReference type="eggNOG" id="COG0228">
    <property type="taxonomic scope" value="Bacteria"/>
</dbReference>
<dbReference type="HOGENOM" id="CLU_100590_5_0_9"/>
<dbReference type="Proteomes" id="UP000001131">
    <property type="component" value="Chromosome"/>
</dbReference>
<dbReference type="GO" id="GO:0005737">
    <property type="term" value="C:cytoplasm"/>
    <property type="evidence" value="ECO:0007669"/>
    <property type="project" value="UniProtKB-ARBA"/>
</dbReference>
<dbReference type="GO" id="GO:0015935">
    <property type="term" value="C:small ribosomal subunit"/>
    <property type="evidence" value="ECO:0007669"/>
    <property type="project" value="TreeGrafter"/>
</dbReference>
<dbReference type="GO" id="GO:0003735">
    <property type="term" value="F:structural constituent of ribosome"/>
    <property type="evidence" value="ECO:0007669"/>
    <property type="project" value="InterPro"/>
</dbReference>
<dbReference type="GO" id="GO:0006412">
    <property type="term" value="P:translation"/>
    <property type="evidence" value="ECO:0007669"/>
    <property type="project" value="UniProtKB-UniRule"/>
</dbReference>
<dbReference type="FunFam" id="3.30.1320.10:FF:000002">
    <property type="entry name" value="30S ribosomal protein S16"/>
    <property type="match status" value="1"/>
</dbReference>
<dbReference type="Gene3D" id="3.30.1320.10">
    <property type="match status" value="1"/>
</dbReference>
<dbReference type="HAMAP" id="MF_00385">
    <property type="entry name" value="Ribosomal_bS16"/>
    <property type="match status" value="1"/>
</dbReference>
<dbReference type="InterPro" id="IPR000307">
    <property type="entry name" value="Ribosomal_bS16"/>
</dbReference>
<dbReference type="InterPro" id="IPR023803">
    <property type="entry name" value="Ribosomal_bS16_dom_sf"/>
</dbReference>
<dbReference type="NCBIfam" id="TIGR00002">
    <property type="entry name" value="S16"/>
    <property type="match status" value="1"/>
</dbReference>
<dbReference type="PANTHER" id="PTHR12919">
    <property type="entry name" value="30S RIBOSOMAL PROTEIN S16"/>
    <property type="match status" value="1"/>
</dbReference>
<dbReference type="PANTHER" id="PTHR12919:SF20">
    <property type="entry name" value="SMALL RIBOSOMAL SUBUNIT PROTEIN BS16M"/>
    <property type="match status" value="1"/>
</dbReference>
<dbReference type="Pfam" id="PF00886">
    <property type="entry name" value="Ribosomal_S16"/>
    <property type="match status" value="1"/>
</dbReference>
<dbReference type="SUPFAM" id="SSF54565">
    <property type="entry name" value="Ribosomal protein S16"/>
    <property type="match status" value="1"/>
</dbReference>
<keyword id="KW-1185">Reference proteome</keyword>
<keyword id="KW-0687">Ribonucleoprotein</keyword>
<keyword id="KW-0689">Ribosomal protein</keyword>
<proteinExistence type="inferred from homology"/>
<organism>
    <name type="scientific">Streptococcus gordonii (strain Challis / ATCC 35105 / BCRC 15272 / CH1 / DL1 / V288)</name>
    <dbReference type="NCBI Taxonomy" id="467705"/>
    <lineage>
        <taxon>Bacteria</taxon>
        <taxon>Bacillati</taxon>
        <taxon>Bacillota</taxon>
        <taxon>Bacilli</taxon>
        <taxon>Lactobacillales</taxon>
        <taxon>Streptococcaceae</taxon>
        <taxon>Streptococcus</taxon>
    </lineage>
</organism>
<reference key="1">
    <citation type="journal article" date="2007" name="J. Bacteriol.">
        <title>Genome-wide transcriptional changes in Streptococcus gordonii in response to competence signaling peptide.</title>
        <authorList>
            <person name="Vickerman M.M."/>
            <person name="Iobst S."/>
            <person name="Jesionowski A.M."/>
            <person name="Gill S.R."/>
        </authorList>
    </citation>
    <scope>NUCLEOTIDE SEQUENCE [LARGE SCALE GENOMIC DNA]</scope>
    <source>
        <strain>Challis / ATCC 35105 / BCRC 15272 / CH1 / DL1 / V288</strain>
    </source>
</reference>
<sequence>MAVKIRLTRMGSKKKPYYRINVADSRSPRDGRFIETVGTYNPLVAENQVTLKEDRVLAWLENGAQPSDTVRNILSKEGVLKKFHDSKYSK</sequence>
<feature type="chain" id="PRO_1000080176" description="Small ribosomal subunit protein bS16">
    <location>
        <begin position="1"/>
        <end position="90"/>
    </location>
</feature>
<comment type="similarity">
    <text evidence="1">Belongs to the bacterial ribosomal protein bS16 family.</text>
</comment>